<dbReference type="EMBL" id="AY534258">
    <property type="protein sequence ID" value="AAT07107.1"/>
    <property type="molecule type" value="mRNA"/>
</dbReference>
<dbReference type="RefSeq" id="NP_001011971.1">
    <property type="nucleotide sequence ID" value="NM_001011971.1"/>
</dbReference>
<dbReference type="SMR" id="Q5GH59"/>
<dbReference type="FunCoup" id="Q5GH59">
    <property type="interactions" value="1600"/>
</dbReference>
<dbReference type="STRING" id="10116.ENSRNOP00000029598"/>
<dbReference type="GlyGen" id="Q5GH59">
    <property type="glycosylation" value="1 site"/>
</dbReference>
<dbReference type="PhosphoSitePlus" id="Q5GH59"/>
<dbReference type="SwissPalm" id="Q5GH59"/>
<dbReference type="PaxDb" id="10116-ENSRNOP00000029598"/>
<dbReference type="GeneID" id="297801"/>
<dbReference type="KEGG" id="rno:297801"/>
<dbReference type="UCSC" id="RGD:1549780">
    <property type="organism name" value="rat"/>
</dbReference>
<dbReference type="AGR" id="RGD:1549780"/>
<dbReference type="CTD" id="114786"/>
<dbReference type="RGD" id="1549780">
    <property type="gene designation" value="Xkr4"/>
</dbReference>
<dbReference type="VEuPathDB" id="HostDB:ENSRNOG00000027276"/>
<dbReference type="eggNOG" id="KOG4790">
    <property type="taxonomic scope" value="Eukaryota"/>
</dbReference>
<dbReference type="HOGENOM" id="CLU_028534_1_0_1"/>
<dbReference type="InParanoid" id="Q5GH59"/>
<dbReference type="PhylomeDB" id="Q5GH59"/>
<dbReference type="TreeFam" id="TF316454"/>
<dbReference type="PRO" id="PR:Q5GH59"/>
<dbReference type="Proteomes" id="UP000002494">
    <property type="component" value="Chromosome 5"/>
</dbReference>
<dbReference type="Bgee" id="ENSRNOG00000027276">
    <property type="expression patterns" value="Expressed in frontal cortex and 4 other cell types or tissues"/>
</dbReference>
<dbReference type="GO" id="GO:0005886">
    <property type="term" value="C:plasma membrane"/>
    <property type="evidence" value="ECO:0000250"/>
    <property type="project" value="UniProtKB"/>
</dbReference>
<dbReference type="GO" id="GO:1902742">
    <property type="term" value="P:apoptotic process involved in development"/>
    <property type="evidence" value="ECO:0000318"/>
    <property type="project" value="GO_Central"/>
</dbReference>
<dbReference type="GO" id="GO:0043652">
    <property type="term" value="P:engulfment of apoptotic cell"/>
    <property type="evidence" value="ECO:0000318"/>
    <property type="project" value="GO_Central"/>
</dbReference>
<dbReference type="GO" id="GO:0070782">
    <property type="term" value="P:phosphatidylserine exposure on apoptotic cell surface"/>
    <property type="evidence" value="ECO:0000318"/>
    <property type="project" value="GO_Central"/>
</dbReference>
<dbReference type="InterPro" id="IPR018629">
    <property type="entry name" value="XK-rel"/>
</dbReference>
<dbReference type="InterPro" id="IPR050895">
    <property type="entry name" value="XK-related_scramblase"/>
</dbReference>
<dbReference type="PANTHER" id="PTHR16024">
    <property type="entry name" value="XK-RELATED PROTEIN"/>
    <property type="match status" value="1"/>
</dbReference>
<dbReference type="PANTHER" id="PTHR16024:SF16">
    <property type="entry name" value="XK-RELATED PROTEIN 4"/>
    <property type="match status" value="1"/>
</dbReference>
<dbReference type="Pfam" id="PF09815">
    <property type="entry name" value="XK-related"/>
    <property type="match status" value="1"/>
</dbReference>
<protein>
    <recommendedName>
        <fullName evidence="5">XK-related protein 4</fullName>
    </recommendedName>
    <component>
        <recommendedName>
            <fullName evidence="1">XK-related protein 4, processed form</fullName>
        </recommendedName>
    </component>
</protein>
<comment type="function">
    <molecule>XK-related protein 4, processed form</molecule>
    <text evidence="1">Phospholipid scramblase that promotes phosphatidylserine exposure on apoptotic cell surface. Phosphatidylserine is a specific marker only present at the surface of apoptotic cells and acts as a specific signal for engulfment.</text>
</comment>
<comment type="catalytic activity">
    <molecule>XK-related protein 4, processed form</molecule>
    <reaction evidence="1">
        <text>a 1,2-diacyl-sn-glycero-3-phospho-L-serine(in) = a 1,2-diacyl-sn-glycero-3-phospho-L-serine(out)</text>
        <dbReference type="Rhea" id="RHEA:38663"/>
        <dbReference type="ChEBI" id="CHEBI:57262"/>
    </reaction>
</comment>
<comment type="activity regulation">
    <text evidence="1">Phospholipid scramblase activity is activated upon caspase cleavage to generate the XK-related protein 4, processed form. Does not act prior the onset of apoptosis.</text>
</comment>
<comment type="activity regulation">
    <molecule>XK-related protein 4, processed form</molecule>
    <text evidence="1">Homodimerizes upon caspase cleavage. Phospholipid scramblase activity is activated following interaction with the processed C-terminus of XRCC4 (protein XRCC4, C-terminus).</text>
</comment>
<comment type="subunit">
    <molecule>XK-related protein 4, processed form</molecule>
    <text evidence="1">Homodimer; homodimerization takes place upon caspase cleavage. Interacts with the processed C-terminus of XRCC4 (protein XRCC4, C-terminus); interaction promotes the phospholipid scramblase activity.</text>
</comment>
<comment type="subcellular location">
    <subcellularLocation>
        <location evidence="1">Cell membrane</location>
        <topology evidence="2">Multi-pass membrane protein</topology>
    </subcellularLocation>
</comment>
<comment type="PTM">
    <molecule>XK-related protein 4, processed form</molecule>
    <text evidence="1">Undergoes proteolytic processing by caspase-3 (CASP3), caspase-6 (CASP6) and caspase-7 (CASP7) to generate the XK-related protein 4, processed form, leading to its activation.</text>
</comment>
<comment type="similarity">
    <text evidence="5">Belongs to the XK family.</text>
</comment>
<keyword id="KW-0053">Apoptosis</keyword>
<keyword id="KW-1003">Cell membrane</keyword>
<keyword id="KW-0472">Membrane</keyword>
<keyword id="KW-0597">Phosphoprotein</keyword>
<keyword id="KW-1185">Reference proteome</keyword>
<keyword id="KW-0812">Transmembrane</keyword>
<keyword id="KW-1133">Transmembrane helix</keyword>
<evidence type="ECO:0000250" key="1">
    <source>
        <dbReference type="UniProtKB" id="Q5GH67"/>
    </source>
</evidence>
<evidence type="ECO:0000255" key="2"/>
<evidence type="ECO:0000256" key="3">
    <source>
        <dbReference type="SAM" id="MobiDB-lite"/>
    </source>
</evidence>
<evidence type="ECO:0000303" key="4">
    <source ref="1"/>
</evidence>
<evidence type="ECO:0000305" key="5"/>
<evidence type="ECO:0000312" key="6">
    <source>
        <dbReference type="RGD" id="1549780"/>
    </source>
</evidence>
<accession>Q5GH59</accession>
<gene>
    <name evidence="6" type="primary">Xkr4</name>
    <name evidence="4" type="synonym">Xrg4</name>
</gene>
<organism>
    <name type="scientific">Rattus norvegicus</name>
    <name type="common">Rat</name>
    <dbReference type="NCBI Taxonomy" id="10116"/>
    <lineage>
        <taxon>Eukaryota</taxon>
        <taxon>Metazoa</taxon>
        <taxon>Chordata</taxon>
        <taxon>Craniata</taxon>
        <taxon>Vertebrata</taxon>
        <taxon>Euteleostomi</taxon>
        <taxon>Mammalia</taxon>
        <taxon>Eutheria</taxon>
        <taxon>Euarchontoglires</taxon>
        <taxon>Glires</taxon>
        <taxon>Rodentia</taxon>
        <taxon>Myomorpha</taxon>
        <taxon>Muroidea</taxon>
        <taxon>Muridae</taxon>
        <taxon>Murinae</taxon>
        <taxon>Rattus</taxon>
    </lineage>
</organism>
<name>XKR4_RAT</name>
<feature type="chain" id="PRO_0000190780" description="XK-related protein 4">
    <location>
        <begin position="1"/>
        <end position="647"/>
    </location>
</feature>
<feature type="chain" id="PRO_0000453292" description="XK-related protein 4, processed form" evidence="1">
    <location>
        <begin position="1"/>
        <end position="564"/>
    </location>
</feature>
<feature type="transmembrane region" description="Helical" evidence="2">
    <location>
        <begin position="142"/>
        <end position="162"/>
    </location>
</feature>
<feature type="transmembrane region" description="Helical" evidence="2">
    <location>
        <begin position="245"/>
        <end position="265"/>
    </location>
</feature>
<feature type="transmembrane region" description="Helical" evidence="2">
    <location>
        <begin position="328"/>
        <end position="348"/>
    </location>
</feature>
<feature type="transmembrane region" description="Helical" evidence="2">
    <location>
        <begin position="362"/>
        <end position="382"/>
    </location>
</feature>
<feature type="transmembrane region" description="Helical" evidence="2">
    <location>
        <begin position="393"/>
        <end position="415"/>
    </location>
</feature>
<feature type="transmembrane region" description="Helical" evidence="2">
    <location>
        <begin position="425"/>
        <end position="445"/>
    </location>
</feature>
<feature type="transmembrane region" description="Helical" evidence="2">
    <location>
        <begin position="454"/>
        <end position="474"/>
    </location>
</feature>
<feature type="transmembrane region" description="Helical" evidence="2">
    <location>
        <begin position="484"/>
        <end position="504"/>
    </location>
</feature>
<feature type="region of interest" description="Disordered" evidence="3">
    <location>
        <begin position="193"/>
        <end position="238"/>
    </location>
</feature>
<feature type="compositionally biased region" description="Polar residues" evidence="3">
    <location>
        <begin position="207"/>
        <end position="236"/>
    </location>
</feature>
<feature type="site" description="Cleavage; by caspase-3, caspase-6 and caspase-7" evidence="1">
    <location>
        <begin position="564"/>
        <end position="565"/>
    </location>
</feature>
<feature type="modified residue" description="Phosphoserine" evidence="1">
    <location>
        <position position="197"/>
    </location>
</feature>
<reference key="1">
    <citation type="submission" date="2004-01" db="EMBL/GenBank/DDBJ databases">
        <title>A superfamily of XK-related genes (XRG) widely expressed in vertebrates and invertebrates.</title>
        <authorList>
            <person name="Huang C.-H."/>
            <person name="Chen Y."/>
        </authorList>
    </citation>
    <scope>NUCLEOTIDE SEQUENCE [MRNA]</scope>
    <source>
        <strain>Sprague-Dawley</strain>
    </source>
</reference>
<proteinExistence type="evidence at transcript level"/>
<sequence length="647" mass="72716">MARPPPLLVQKPSFLVEACCSPSPATHLAPYHTQPGARTPSTIQRDLLFPIPRRCHARSSPRPPALGGGPTQRLQHAARSAHPIPPSVKEIHPTFSEIPRARASDCCAAALGVQHWPARHPHPPLPSISLAVDYYLLGQRWWFGLTLFFVVLGSLSVQVFSFRWFVHDFSTEDSATTTASTCQQPGADCKTVVSSGSAAGEGEARPSTPQRQASNASKSNIAATNSGSNSNGATRTSGKHRSASCSFCIWLLQSLIHILQLGQVWRYLHTIYLGIRSRQSGESSRWRFYWKMVYEYADVSMLHLLATFLESAPQLVLQLCIIVQTHSLQALQGFTAAASLVSLAWALASYQKALRDSRDDKKPISYMAVIIQFCWHFFTIAARVITFALFASVFQLYFGIFIVLHWCIMTFWIVHCETEFCITKWEEIVFDMVVGIIYIFSWFNVKEGRTRCRLFIYYFVILLENTALSALWYLYKAPQIADAFAIPALCVVFSSFLTGVVFMLMYYAFFHPNGPRFGQSPSCACDDPATAFSMPPEVATSTLRSISNNRSVASDRDQKFAERDGCVPVFQVRPTAPPTPSSRPPRIEESVIKIDLFRNRYPAWERHVLDRSLRKAILAFECSPSPPRLQYKDDALIQERLEYETTL</sequence>